<organism>
    <name type="scientific">Thiobacillus denitrificans (strain ATCC 25259 / T1)</name>
    <dbReference type="NCBI Taxonomy" id="292415"/>
    <lineage>
        <taxon>Bacteria</taxon>
        <taxon>Pseudomonadati</taxon>
        <taxon>Pseudomonadota</taxon>
        <taxon>Betaproteobacteria</taxon>
        <taxon>Nitrosomonadales</taxon>
        <taxon>Thiobacillaceae</taxon>
        <taxon>Thiobacillus</taxon>
    </lineage>
</organism>
<protein>
    <recommendedName>
        <fullName evidence="1">3-hydroxyacyl-[acyl-carrier-protein] dehydratase FabZ</fullName>
        <ecNumber evidence="1">4.2.1.59</ecNumber>
    </recommendedName>
    <alternativeName>
        <fullName evidence="1">(3R)-hydroxymyristoyl-[acyl-carrier-protein] dehydratase</fullName>
        <shortName evidence="1">(3R)-hydroxymyristoyl-ACP dehydrase</shortName>
    </alternativeName>
    <alternativeName>
        <fullName evidence="1">Beta-hydroxyacyl-ACP dehydratase</fullName>
    </alternativeName>
</protein>
<sequence length="145" mass="16128">MDIEQVMQYLPHRYPFLLVDKVTELELGKRITAVKNVTINEPFFNGHFPGAPVMPGVLILEAMAQAAGILSFKTKNYSPEQIGIIYFAGIDGARFKKPVKPGDQLVLKAEIVREVRGIWKYTGRAEVDGALVAEAELMATLRDKP</sequence>
<reference key="1">
    <citation type="journal article" date="2006" name="J. Bacteriol.">
        <title>The genome sequence of the obligately chemolithoautotrophic, facultatively anaerobic bacterium Thiobacillus denitrificans.</title>
        <authorList>
            <person name="Beller H.R."/>
            <person name="Chain P.S."/>
            <person name="Letain T.E."/>
            <person name="Chakicherla A."/>
            <person name="Larimer F.W."/>
            <person name="Richardson P.M."/>
            <person name="Coleman M.A."/>
            <person name="Wood A.P."/>
            <person name="Kelly D.P."/>
        </authorList>
    </citation>
    <scope>NUCLEOTIDE SEQUENCE [LARGE SCALE GENOMIC DNA]</scope>
    <source>
        <strain>ATCC 25259 / T1</strain>
    </source>
</reference>
<feature type="chain" id="PRO_0000230844" description="3-hydroxyacyl-[acyl-carrier-protein] dehydratase FabZ">
    <location>
        <begin position="1"/>
        <end position="145"/>
    </location>
</feature>
<feature type="active site" evidence="1">
    <location>
        <position position="47"/>
    </location>
</feature>
<evidence type="ECO:0000255" key="1">
    <source>
        <dbReference type="HAMAP-Rule" id="MF_00406"/>
    </source>
</evidence>
<name>FABZ_THIDA</name>
<comment type="function">
    <text evidence="1">Involved in unsaturated fatty acids biosynthesis. Catalyzes the dehydration of short chain beta-hydroxyacyl-ACPs and long chain saturated and unsaturated beta-hydroxyacyl-ACPs.</text>
</comment>
<comment type="catalytic activity">
    <reaction evidence="1">
        <text>a (3R)-hydroxyacyl-[ACP] = a (2E)-enoyl-[ACP] + H2O</text>
        <dbReference type="Rhea" id="RHEA:13097"/>
        <dbReference type="Rhea" id="RHEA-COMP:9925"/>
        <dbReference type="Rhea" id="RHEA-COMP:9945"/>
        <dbReference type="ChEBI" id="CHEBI:15377"/>
        <dbReference type="ChEBI" id="CHEBI:78784"/>
        <dbReference type="ChEBI" id="CHEBI:78827"/>
        <dbReference type="EC" id="4.2.1.59"/>
    </reaction>
</comment>
<comment type="subcellular location">
    <subcellularLocation>
        <location evidence="1">Cytoplasm</location>
    </subcellularLocation>
</comment>
<comment type="similarity">
    <text evidence="1">Belongs to the thioester dehydratase family. FabZ subfamily.</text>
</comment>
<dbReference type="EC" id="4.2.1.59" evidence="1"/>
<dbReference type="EMBL" id="CP000116">
    <property type="protein sequence ID" value="AAZ96749.1"/>
    <property type="molecule type" value="Genomic_DNA"/>
</dbReference>
<dbReference type="SMR" id="Q3SKN0"/>
<dbReference type="STRING" id="292415.Tbd_0796"/>
<dbReference type="KEGG" id="tbd:Tbd_0796"/>
<dbReference type="eggNOG" id="COG0764">
    <property type="taxonomic scope" value="Bacteria"/>
</dbReference>
<dbReference type="HOGENOM" id="CLU_078912_1_0_4"/>
<dbReference type="Proteomes" id="UP000008291">
    <property type="component" value="Chromosome"/>
</dbReference>
<dbReference type="GO" id="GO:0005737">
    <property type="term" value="C:cytoplasm"/>
    <property type="evidence" value="ECO:0007669"/>
    <property type="project" value="UniProtKB-SubCell"/>
</dbReference>
<dbReference type="GO" id="GO:0016020">
    <property type="term" value="C:membrane"/>
    <property type="evidence" value="ECO:0007669"/>
    <property type="project" value="GOC"/>
</dbReference>
<dbReference type="GO" id="GO:0019171">
    <property type="term" value="F:(3R)-hydroxyacyl-[acyl-carrier-protein] dehydratase activity"/>
    <property type="evidence" value="ECO:0007669"/>
    <property type="project" value="UniProtKB-EC"/>
</dbReference>
<dbReference type="GO" id="GO:0006633">
    <property type="term" value="P:fatty acid biosynthetic process"/>
    <property type="evidence" value="ECO:0007669"/>
    <property type="project" value="UniProtKB-UniRule"/>
</dbReference>
<dbReference type="GO" id="GO:0009245">
    <property type="term" value="P:lipid A biosynthetic process"/>
    <property type="evidence" value="ECO:0007669"/>
    <property type="project" value="UniProtKB-UniRule"/>
</dbReference>
<dbReference type="CDD" id="cd01288">
    <property type="entry name" value="FabZ"/>
    <property type="match status" value="1"/>
</dbReference>
<dbReference type="FunFam" id="3.10.129.10:FF:000001">
    <property type="entry name" value="3-hydroxyacyl-[acyl-carrier-protein] dehydratase FabZ"/>
    <property type="match status" value="1"/>
</dbReference>
<dbReference type="Gene3D" id="3.10.129.10">
    <property type="entry name" value="Hotdog Thioesterase"/>
    <property type="match status" value="1"/>
</dbReference>
<dbReference type="HAMAP" id="MF_00406">
    <property type="entry name" value="FabZ"/>
    <property type="match status" value="1"/>
</dbReference>
<dbReference type="InterPro" id="IPR013114">
    <property type="entry name" value="FabA_FabZ"/>
</dbReference>
<dbReference type="InterPro" id="IPR010084">
    <property type="entry name" value="FabZ"/>
</dbReference>
<dbReference type="InterPro" id="IPR029069">
    <property type="entry name" value="HotDog_dom_sf"/>
</dbReference>
<dbReference type="NCBIfam" id="TIGR01750">
    <property type="entry name" value="fabZ"/>
    <property type="match status" value="1"/>
</dbReference>
<dbReference type="NCBIfam" id="NF000582">
    <property type="entry name" value="PRK00006.1"/>
    <property type="match status" value="1"/>
</dbReference>
<dbReference type="PANTHER" id="PTHR30272">
    <property type="entry name" value="3-HYDROXYACYL-[ACYL-CARRIER-PROTEIN] DEHYDRATASE"/>
    <property type="match status" value="1"/>
</dbReference>
<dbReference type="PANTHER" id="PTHR30272:SF1">
    <property type="entry name" value="3-HYDROXYACYL-[ACYL-CARRIER-PROTEIN] DEHYDRATASE"/>
    <property type="match status" value="1"/>
</dbReference>
<dbReference type="Pfam" id="PF07977">
    <property type="entry name" value="FabA"/>
    <property type="match status" value="1"/>
</dbReference>
<dbReference type="SUPFAM" id="SSF54637">
    <property type="entry name" value="Thioesterase/thiol ester dehydrase-isomerase"/>
    <property type="match status" value="1"/>
</dbReference>
<gene>
    <name evidence="1" type="primary">fabZ</name>
    <name type="ordered locus">Tbd_0796</name>
</gene>
<proteinExistence type="inferred from homology"/>
<keyword id="KW-0963">Cytoplasm</keyword>
<keyword id="KW-0441">Lipid A biosynthesis</keyword>
<keyword id="KW-0444">Lipid biosynthesis</keyword>
<keyword id="KW-0443">Lipid metabolism</keyword>
<keyword id="KW-0456">Lyase</keyword>
<keyword id="KW-1185">Reference proteome</keyword>
<accession>Q3SKN0</accession>